<evidence type="ECO:0000250" key="1"/>
<evidence type="ECO:0000250" key="2">
    <source>
        <dbReference type="UniProtKB" id="A0QVQ8"/>
    </source>
</evidence>
<evidence type="ECO:0000250" key="3">
    <source>
        <dbReference type="UniProtKB" id="Q08352"/>
    </source>
</evidence>
<evidence type="ECO:0000255" key="4"/>
<evidence type="ECO:0000269" key="5">
    <source>
    </source>
</evidence>
<evidence type="ECO:0000269" key="6">
    <source>
    </source>
</evidence>
<evidence type="ECO:0000303" key="7">
    <source>
    </source>
</evidence>
<evidence type="ECO:0000305" key="8"/>
<gene>
    <name type="primary">ald</name>
</gene>
<keyword id="KW-0963">Cytoplasm</keyword>
<keyword id="KW-0903">Direct protein sequencing</keyword>
<keyword id="KW-0520">NAD</keyword>
<keyword id="KW-0547">Nucleotide-binding</keyword>
<keyword id="KW-0560">Oxidoreductase</keyword>
<keyword id="KW-0749">Sporulation</keyword>
<organism>
    <name type="scientific">Lysinibacillus sphaericus</name>
    <name type="common">Bacillus sphaericus</name>
    <dbReference type="NCBI Taxonomy" id="1421"/>
    <lineage>
        <taxon>Bacteria</taxon>
        <taxon>Bacillati</taxon>
        <taxon>Bacillota</taxon>
        <taxon>Bacilli</taxon>
        <taxon>Bacillales</taxon>
        <taxon>Bacillaceae</taxon>
        <taxon>Lysinibacillus</taxon>
    </lineage>
</organism>
<dbReference type="EC" id="1.4.1.1" evidence="6"/>
<dbReference type="EMBL" id="M33298">
    <property type="protein sequence ID" value="AAA22210.1"/>
    <property type="molecule type" value="Genomic_DNA"/>
</dbReference>
<dbReference type="PIR" id="A34261">
    <property type="entry name" value="A34261"/>
</dbReference>
<dbReference type="SMR" id="P17556"/>
<dbReference type="STRING" id="1421.A2J09_13020"/>
<dbReference type="UniPathway" id="UPA00527">
    <property type="reaction ID" value="UER00585"/>
</dbReference>
<dbReference type="GO" id="GO:0005829">
    <property type="term" value="C:cytosol"/>
    <property type="evidence" value="ECO:0000250"/>
    <property type="project" value="UniProtKB"/>
</dbReference>
<dbReference type="GO" id="GO:0005886">
    <property type="term" value="C:plasma membrane"/>
    <property type="evidence" value="ECO:0007669"/>
    <property type="project" value="TreeGrafter"/>
</dbReference>
<dbReference type="GO" id="GO:0000286">
    <property type="term" value="F:alanine dehydrogenase activity"/>
    <property type="evidence" value="ECO:0000314"/>
    <property type="project" value="UniProtKB"/>
</dbReference>
<dbReference type="GO" id="GO:0000166">
    <property type="term" value="F:nucleotide binding"/>
    <property type="evidence" value="ECO:0007669"/>
    <property type="project" value="UniProtKB-KW"/>
</dbReference>
<dbReference type="GO" id="GO:0006524">
    <property type="term" value="P:alanine catabolic process"/>
    <property type="evidence" value="ECO:0000250"/>
    <property type="project" value="UniProtKB"/>
</dbReference>
<dbReference type="GO" id="GO:0042853">
    <property type="term" value="P:L-alanine catabolic process"/>
    <property type="evidence" value="ECO:0007669"/>
    <property type="project" value="UniProtKB-UniPathway"/>
</dbReference>
<dbReference type="GO" id="GO:0030435">
    <property type="term" value="P:sporulation resulting in formation of a cellular spore"/>
    <property type="evidence" value="ECO:0007669"/>
    <property type="project" value="UniProtKB-KW"/>
</dbReference>
<dbReference type="CDD" id="cd05305">
    <property type="entry name" value="L-AlaDH"/>
    <property type="match status" value="1"/>
</dbReference>
<dbReference type="FunFam" id="3.40.50.720:FF:000049">
    <property type="entry name" value="Alanine dehydrogenase"/>
    <property type="match status" value="1"/>
</dbReference>
<dbReference type="Gene3D" id="3.40.50.720">
    <property type="entry name" value="NAD(P)-binding Rossmann-like Domain"/>
    <property type="match status" value="2"/>
</dbReference>
<dbReference type="InterPro" id="IPR008141">
    <property type="entry name" value="Ala_DH"/>
</dbReference>
<dbReference type="InterPro" id="IPR008143">
    <property type="entry name" value="Ala_DH/PNT_CS2"/>
</dbReference>
<dbReference type="InterPro" id="IPR008142">
    <property type="entry name" value="AlaDH/PNT_CS1"/>
</dbReference>
<dbReference type="InterPro" id="IPR007886">
    <property type="entry name" value="AlaDH/PNT_N"/>
</dbReference>
<dbReference type="InterPro" id="IPR007698">
    <property type="entry name" value="AlaDH/PNT_NAD(H)-bd"/>
</dbReference>
<dbReference type="InterPro" id="IPR036291">
    <property type="entry name" value="NAD(P)-bd_dom_sf"/>
</dbReference>
<dbReference type="NCBIfam" id="TIGR00518">
    <property type="entry name" value="alaDH"/>
    <property type="match status" value="1"/>
</dbReference>
<dbReference type="PANTHER" id="PTHR42795">
    <property type="entry name" value="ALANINE DEHYDROGENASE"/>
    <property type="match status" value="1"/>
</dbReference>
<dbReference type="PANTHER" id="PTHR42795:SF1">
    <property type="entry name" value="ALANINE DEHYDROGENASE"/>
    <property type="match status" value="1"/>
</dbReference>
<dbReference type="Pfam" id="PF01262">
    <property type="entry name" value="AlaDh_PNT_C"/>
    <property type="match status" value="1"/>
</dbReference>
<dbReference type="Pfam" id="PF05222">
    <property type="entry name" value="AlaDh_PNT_N"/>
    <property type="match status" value="1"/>
</dbReference>
<dbReference type="PIRSF" id="PIRSF000183">
    <property type="entry name" value="Alanine_dh"/>
    <property type="match status" value="1"/>
</dbReference>
<dbReference type="SMART" id="SM01002">
    <property type="entry name" value="AlaDh_PNT_C"/>
    <property type="match status" value="1"/>
</dbReference>
<dbReference type="SMART" id="SM01003">
    <property type="entry name" value="AlaDh_PNT_N"/>
    <property type="match status" value="1"/>
</dbReference>
<dbReference type="SUPFAM" id="SSF52283">
    <property type="entry name" value="Formate/glycerate dehydrogenase catalytic domain-like"/>
    <property type="match status" value="1"/>
</dbReference>
<dbReference type="SUPFAM" id="SSF51735">
    <property type="entry name" value="NAD(P)-binding Rossmann-fold domains"/>
    <property type="match status" value="1"/>
</dbReference>
<dbReference type="PROSITE" id="PS00836">
    <property type="entry name" value="ALADH_PNT_1"/>
    <property type="match status" value="1"/>
</dbReference>
<dbReference type="PROSITE" id="PS00837">
    <property type="entry name" value="ALADH_PNT_2"/>
    <property type="match status" value="1"/>
</dbReference>
<name>DHA_LYSSH</name>
<sequence length="372" mass="39460">MKIGIPKEIKNNENRVAMTPAGVVSLTHAGHERLAIETGGGIGSSFTDAEYVAAGAAYRCIGKEAWAQEMILKVKEPVASEYDYFYEGQILFTYLHLAPRAELTQALIDKKVVGIAYETVQLANGSLPLLTPMSEVAGKMATQIGAQYLEKNHGGKGILLGGVSGVHARKVTVIGGGIAGTNAAKIAVGMGADVTVIDLSPERLRQLEDMFGRDVQTLMSNPYNIAESVKHSDLVVGAVLIPGAKAPKLVSEEMIQSMQPGSVVVDIAIDQGGIFATSDRVTTHDDPTYVKHGVVHYAVANMPGAVPRTSTIALTNNTIPYALQIANKGYKQACIDNPALKKGVNALEGHITYKAVAEAQGLPYVNVDELIQ</sequence>
<comment type="function">
    <text evidence="3 5 6">Catalyzes the reversible reductive amination of pyruvate to L-alanine. Prefers L-alanine for oxidative deamination, other substrates are poorly reactive. In the other direction 2-oxobutyrate is almost as reactive as pyruvate. Ammonia is the sole amino donor for the reductive amination of pyruvate, NADPH is inert. Reductive amination proceeds through a sequential, ordered ternary-binary mechanism, where NADH binds first followed by ammonia and pyruvate; the products are released in the order L-alanine and NAD(+) (PubMed:2340274, PubMed:488097). A key factor in the assimilation of L-alanine as an energy source via the tricarboxylic acid cycle during sporulation (By similarity).</text>
</comment>
<comment type="catalytic activity">
    <reaction evidence="6">
        <text>L-alanine + NAD(+) + H2O = pyruvate + NH4(+) + NADH + H(+)</text>
        <dbReference type="Rhea" id="RHEA:18405"/>
        <dbReference type="ChEBI" id="CHEBI:15361"/>
        <dbReference type="ChEBI" id="CHEBI:15377"/>
        <dbReference type="ChEBI" id="CHEBI:15378"/>
        <dbReference type="ChEBI" id="CHEBI:28938"/>
        <dbReference type="ChEBI" id="CHEBI:57540"/>
        <dbReference type="ChEBI" id="CHEBI:57945"/>
        <dbReference type="ChEBI" id="CHEBI:57972"/>
        <dbReference type="EC" id="1.4.1.1"/>
    </reaction>
    <physiologicalReaction direction="left-to-right" evidence="6">
        <dbReference type="Rhea" id="RHEA:18406"/>
    </physiologicalReaction>
    <physiologicalReaction direction="right-to-left" evidence="6">
        <dbReference type="Rhea" id="RHEA:18407"/>
    </physiologicalReaction>
</comment>
<comment type="activity regulation">
    <text evidence="6">Inhibited by p-chloromercuribenzoate and HgCl(2) and by Cu(2+) and Pb(2+) salts, unaffected by amino acids such as D-alanine and beta-alanine or by nucleotides or nucleosides.</text>
</comment>
<comment type="biophysicochemical properties">
    <kinetics>
        <KM evidence="6">18.9 uM for oxidative deamination of L-alanine</KM>
        <KM evidence="6">330 uM for oxidative deamination of L-2-aminobutyrate</KM>
        <KM evidence="6">39 uM for oxidative deamination of L-serine</KM>
        <KM evidence="6">20 uM for oxidative deamination of L-valine</KM>
        <KM evidence="6">14 uM for oxidative deamination of L-norvaline</KM>
        <KM evidence="6">1.7 mM for reductive amination of pyruvate</KM>
        <KM evidence="6">80 mM for reductive amination of 3-hydroxypyruvate</KM>
        <KM evidence="6">23 mM for reductive amination of 2-oxovalerate</KM>
        <KM evidence="6">12 mM for reductive amination of glyoxylate</KM>
        <KM evidence="6">11 mM for reductive amination of 2-oxobutyrate</KM>
        <KM evidence="6">11 mM for reductive amination of 2-oxo-3-methylbutanoate</KM>
    </kinetics>
    <phDependence>
        <text evidence="6">Optimum pH is 10.0-10.5 for the oxidative deamination of L-alanine and about 9.0 for reductive amination of pyruvate.</text>
    </phDependence>
    <temperatureDependence>
        <text evidence="5 6">Loses about 50% of its initial activity when heated at 65 degrees Celsius for 5 minutes.</text>
    </temperatureDependence>
</comment>
<comment type="pathway">
    <text>Amino-acid degradation; L-alanine degradation via dehydrogenase pathway; NH(3) and pyruvate from L-alanine: step 1/1.</text>
</comment>
<comment type="subunit">
    <text evidence="5 6">Homohexamer.</text>
</comment>
<comment type="subcellular location">
    <subcellularLocation>
        <location evidence="2">Cytoplasm</location>
    </subcellularLocation>
</comment>
<comment type="similarity">
    <text evidence="8">Belongs to the AlaDH/PNT family.</text>
</comment>
<reference key="1">
    <citation type="journal article" date="1990" name="Biochemistry">
        <title>Alanine dehydrogenases from two Bacillus species with distinct thermostabilities: molecular cloning, DNA and protein sequence determination, and structural comparison with other NAD(P)(+)-dependent dehydrogenases.</title>
        <authorList>
            <person name="Kuroda S."/>
            <person name="Tanizawa K."/>
            <person name="Sakamoto Y."/>
            <person name="Tanaka H."/>
            <person name="Soda K."/>
        </authorList>
    </citation>
    <scope>NUCLEOTIDE SEQUENCE [GENOMIC DNA]</scope>
    <scope>PROTEIN SEQUENCE OF 1-23; 64-73; 112-151; 157-167; 204-205; 214-230; 281-321; 329-331 AND 343-372</scope>
    <scope>FUNCTION AS AN ALANINE DEHYDROGENASE</scope>
    <scope>BIOPHYSICOCHEMICAL PROPERTIES</scope>
    <scope>SUBUNIT</scope>
    <source>
        <strain>ATCC 10208 / DSM 5019 / NBRC 3525 / NCIMB 11935 / NRS 966 / 1911</strain>
    </source>
</reference>
<reference key="2">
    <citation type="journal article" date="1979" name="Eur. J. Biochem.">
        <title>Purification and properties of alanine dehydrogenase from Bacillus sphaericus.</title>
        <authorList>
            <person name="Ohashima T."/>
            <person name="Soda K."/>
        </authorList>
    </citation>
    <scope>PROTEIN SEQUENCE OF 1 AND 372</scope>
    <scope>FUNCTION</scope>
    <scope>CATALYTIC ACTIVITY</scope>
    <scope>SUBSTRATE SPECIFICITY</scope>
    <scope>REACTION MECHANISM</scope>
    <scope>ACTIVITY REGULATION</scope>
    <scope>BIOPHYSICOCHEMICAL PROPERTIES</scope>
    <scope>SUBUNIT</scope>
    <source>
        <strain>ATCC 10208 / DSM 5019 / NBRC 3525 / NCIMB 11935 / NRS 966 / 1911</strain>
    </source>
</reference>
<protein>
    <recommendedName>
        <fullName evidence="7">Alanine dehydrogenase</fullName>
        <ecNumber evidence="6">1.4.1.1</ecNumber>
    </recommendedName>
</protein>
<proteinExistence type="evidence at protein level"/>
<accession>P17556</accession>
<feature type="chain" id="PRO_0000198990" description="Alanine dehydrogenase">
    <location>
        <begin position="1"/>
        <end position="372"/>
    </location>
</feature>
<feature type="active site" description="Proton donor/acceptor" evidence="4">
    <location>
        <position position="96"/>
    </location>
</feature>
<feature type="active site" description="Proton donor/acceptor" evidence="1">
    <location>
        <position position="270"/>
    </location>
</feature>
<feature type="binding site" evidence="1">
    <location>
        <position position="15"/>
    </location>
    <ligand>
        <name>substrate</name>
    </ligand>
</feature>
<feature type="binding site" evidence="1">
    <location>
        <position position="75"/>
    </location>
    <ligand>
        <name>substrate</name>
    </ligand>
</feature>
<feature type="binding site" evidence="1">
    <location>
        <position position="134"/>
    </location>
    <ligand>
        <name>NAD(+)</name>
        <dbReference type="ChEBI" id="CHEBI:57540"/>
    </ligand>
</feature>
<feature type="binding site" evidence="1">
    <location>
        <begin position="178"/>
        <end position="179"/>
    </location>
    <ligand>
        <name>NAD(+)</name>
        <dbReference type="ChEBI" id="CHEBI:57540"/>
    </ligand>
</feature>
<feature type="binding site" evidence="1">
    <location>
        <position position="198"/>
    </location>
    <ligand>
        <name>NAD(+)</name>
        <dbReference type="ChEBI" id="CHEBI:57540"/>
    </ligand>
</feature>
<feature type="binding site" evidence="1">
    <location>
        <position position="220"/>
    </location>
    <ligand>
        <name>NAD(+)</name>
        <dbReference type="ChEBI" id="CHEBI:57540"/>
    </ligand>
</feature>
<feature type="binding site" evidence="1">
    <location>
        <begin position="239"/>
        <end position="240"/>
    </location>
    <ligand>
        <name>NAD(+)</name>
        <dbReference type="ChEBI" id="CHEBI:57540"/>
    </ligand>
</feature>
<feature type="binding site" evidence="1">
    <location>
        <begin position="267"/>
        <end position="270"/>
    </location>
    <ligand>
        <name>NAD(+)</name>
        <dbReference type="ChEBI" id="CHEBI:57540"/>
    </ligand>
</feature>
<feature type="binding site" evidence="1">
    <location>
        <position position="280"/>
    </location>
    <ligand>
        <name>NAD(+)</name>
        <dbReference type="ChEBI" id="CHEBI:57540"/>
    </ligand>
</feature>
<feature type="binding site" evidence="1">
    <location>
        <begin position="299"/>
        <end position="302"/>
    </location>
    <ligand>
        <name>NAD(+)</name>
        <dbReference type="ChEBI" id="CHEBI:57540"/>
    </ligand>
</feature>